<keyword id="KW-1015">Disulfide bond</keyword>
<keyword id="KW-0249">Electron transport</keyword>
<keyword id="KW-0676">Redox-active center</keyword>
<keyword id="KW-1185">Reference proteome</keyword>
<keyword id="KW-0813">Transport</keyword>
<feature type="chain" id="PRO_0000141586" description="Glutaredoxin 2">
    <location>
        <begin position="1"/>
        <end position="215"/>
    </location>
</feature>
<feature type="domain" description="GST N-terminal">
    <location>
        <begin position="1"/>
        <end position="77"/>
    </location>
</feature>
<feature type="disulfide bond" description="Redox-active" evidence="1">
    <location>
        <begin position="9"/>
        <end position="12"/>
    </location>
</feature>
<evidence type="ECO:0000250" key="1"/>
<evidence type="ECO:0000305" key="2"/>
<protein>
    <recommendedName>
        <fullName>Glutaredoxin 2</fullName>
        <shortName>Grx2</shortName>
    </recommendedName>
</protein>
<organism>
    <name type="scientific">Escherichia coli O157:H7</name>
    <dbReference type="NCBI Taxonomy" id="83334"/>
    <lineage>
        <taxon>Bacteria</taxon>
        <taxon>Pseudomonadati</taxon>
        <taxon>Pseudomonadota</taxon>
        <taxon>Gammaproteobacteria</taxon>
        <taxon>Enterobacterales</taxon>
        <taxon>Enterobacteriaceae</taxon>
        <taxon>Escherichia</taxon>
    </lineage>
</organism>
<gene>
    <name type="primary">grxB</name>
    <name type="ordered locus">Z1701</name>
    <name type="ordered locus">ECs1442</name>
</gene>
<proteinExistence type="inferred from homology"/>
<reference key="1">
    <citation type="journal article" date="2001" name="Nature">
        <title>Genome sequence of enterohaemorrhagic Escherichia coli O157:H7.</title>
        <authorList>
            <person name="Perna N.T."/>
            <person name="Plunkett G. III"/>
            <person name="Burland V."/>
            <person name="Mau B."/>
            <person name="Glasner J.D."/>
            <person name="Rose D.J."/>
            <person name="Mayhew G.F."/>
            <person name="Evans P.S."/>
            <person name="Gregor J."/>
            <person name="Kirkpatrick H.A."/>
            <person name="Posfai G."/>
            <person name="Hackett J."/>
            <person name="Klink S."/>
            <person name="Boutin A."/>
            <person name="Shao Y."/>
            <person name="Miller L."/>
            <person name="Grotbeck E.J."/>
            <person name="Davis N.W."/>
            <person name="Lim A."/>
            <person name="Dimalanta E.T."/>
            <person name="Potamousis K."/>
            <person name="Apodaca J."/>
            <person name="Anantharaman T.S."/>
            <person name="Lin J."/>
            <person name="Yen G."/>
            <person name="Schwartz D.C."/>
            <person name="Welch R.A."/>
            <person name="Blattner F.R."/>
        </authorList>
    </citation>
    <scope>NUCLEOTIDE SEQUENCE [LARGE SCALE GENOMIC DNA]</scope>
    <source>
        <strain>O157:H7 / EDL933 / ATCC 700927 / EHEC</strain>
    </source>
</reference>
<reference key="2">
    <citation type="journal article" date="2001" name="DNA Res.">
        <title>Complete genome sequence of enterohemorrhagic Escherichia coli O157:H7 and genomic comparison with a laboratory strain K-12.</title>
        <authorList>
            <person name="Hayashi T."/>
            <person name="Makino K."/>
            <person name="Ohnishi M."/>
            <person name="Kurokawa K."/>
            <person name="Ishii K."/>
            <person name="Yokoyama K."/>
            <person name="Han C.-G."/>
            <person name="Ohtsubo E."/>
            <person name="Nakayama K."/>
            <person name="Murata T."/>
            <person name="Tanaka M."/>
            <person name="Tobe T."/>
            <person name="Iida T."/>
            <person name="Takami H."/>
            <person name="Honda T."/>
            <person name="Sasakawa C."/>
            <person name="Ogasawara N."/>
            <person name="Yasunaga T."/>
            <person name="Kuhara S."/>
            <person name="Shiba T."/>
            <person name="Hattori M."/>
            <person name="Shinagawa H."/>
        </authorList>
    </citation>
    <scope>NUCLEOTIDE SEQUENCE [LARGE SCALE GENOMIC DNA]</scope>
    <source>
        <strain>O157:H7 / Sakai / RIMD 0509952 / EHEC</strain>
    </source>
</reference>
<comment type="function">
    <text evidence="1">Involved in reducing some disulfides in a coupled system with glutathione reductase. Does not act as hydrogen donor for ribonucleotide reductase (By similarity).</text>
</comment>
<comment type="similarity">
    <text evidence="2">Belongs to the glutaredoxin family.</text>
</comment>
<accession>P0AC61</accession>
<accession>P39811</accession>
<accession>P75928</accession>
<accession>P77043</accession>
<name>GLRX2_ECO57</name>
<dbReference type="EMBL" id="AE005174">
    <property type="protein sequence ID" value="AAG55810.1"/>
    <property type="molecule type" value="Genomic_DNA"/>
</dbReference>
<dbReference type="EMBL" id="BA000007">
    <property type="protein sequence ID" value="BAB34865.1"/>
    <property type="molecule type" value="Genomic_DNA"/>
</dbReference>
<dbReference type="PIR" id="B99809">
    <property type="entry name" value="B99809"/>
</dbReference>
<dbReference type="PIR" id="F85668">
    <property type="entry name" value="F85668"/>
</dbReference>
<dbReference type="RefSeq" id="NP_309469.1">
    <property type="nucleotide sequence ID" value="NC_002695.1"/>
</dbReference>
<dbReference type="RefSeq" id="WP_000780912.1">
    <property type="nucleotide sequence ID" value="NZ_VOAI01000018.1"/>
</dbReference>
<dbReference type="BMRB" id="P0AC61"/>
<dbReference type="SMR" id="P0AC61"/>
<dbReference type="STRING" id="155864.Z1701"/>
<dbReference type="GeneID" id="912384"/>
<dbReference type="GeneID" id="93776343"/>
<dbReference type="KEGG" id="ece:Z1701"/>
<dbReference type="KEGG" id="ecs:ECs_1442"/>
<dbReference type="PATRIC" id="fig|386585.9.peg.1543"/>
<dbReference type="eggNOG" id="COG2999">
    <property type="taxonomic scope" value="Bacteria"/>
</dbReference>
<dbReference type="HOGENOM" id="CLU_072939_0_1_6"/>
<dbReference type="OMA" id="NLTCVKG"/>
<dbReference type="Proteomes" id="UP000000558">
    <property type="component" value="Chromosome"/>
</dbReference>
<dbReference type="Proteomes" id="UP000002519">
    <property type="component" value="Chromosome"/>
</dbReference>
<dbReference type="GO" id="GO:0005829">
    <property type="term" value="C:cytosol"/>
    <property type="evidence" value="ECO:0007669"/>
    <property type="project" value="InterPro"/>
</dbReference>
<dbReference type="CDD" id="cd03199">
    <property type="entry name" value="GST_C_GRX2"/>
    <property type="match status" value="1"/>
</dbReference>
<dbReference type="CDD" id="cd03037">
    <property type="entry name" value="GST_N_GRX2"/>
    <property type="match status" value="1"/>
</dbReference>
<dbReference type="Gene3D" id="1.20.1050.10">
    <property type="match status" value="1"/>
</dbReference>
<dbReference type="Gene3D" id="3.40.30.10">
    <property type="entry name" value="Glutaredoxin"/>
    <property type="match status" value="1"/>
</dbReference>
<dbReference type="InterPro" id="IPR011767">
    <property type="entry name" value="GLR_AS"/>
</dbReference>
<dbReference type="InterPro" id="IPR007494">
    <property type="entry name" value="Glutaredoxin2_C"/>
</dbReference>
<dbReference type="InterPro" id="IPR036282">
    <property type="entry name" value="Glutathione-S-Trfase_C_sf"/>
</dbReference>
<dbReference type="InterPro" id="IPR004045">
    <property type="entry name" value="Glutathione_S-Trfase_N"/>
</dbReference>
<dbReference type="InterPro" id="IPR011901">
    <property type="entry name" value="Grx2"/>
</dbReference>
<dbReference type="InterPro" id="IPR036249">
    <property type="entry name" value="Thioredoxin-like_sf"/>
</dbReference>
<dbReference type="NCBIfam" id="TIGR02182">
    <property type="entry name" value="GRXB"/>
    <property type="match status" value="1"/>
</dbReference>
<dbReference type="NCBIfam" id="NF007702">
    <property type="entry name" value="PRK10387.1"/>
    <property type="match status" value="1"/>
</dbReference>
<dbReference type="Pfam" id="PF04399">
    <property type="entry name" value="Glutaredoxin2_C"/>
    <property type="match status" value="1"/>
</dbReference>
<dbReference type="Pfam" id="PF13417">
    <property type="entry name" value="GST_N_3"/>
    <property type="match status" value="1"/>
</dbReference>
<dbReference type="SFLD" id="SFLDG01183">
    <property type="entry name" value="Grx2-like"/>
    <property type="match status" value="1"/>
</dbReference>
<dbReference type="SFLD" id="SFLDG01204">
    <property type="entry name" value="Grx2-like.1"/>
    <property type="match status" value="1"/>
</dbReference>
<dbReference type="SUPFAM" id="SSF47616">
    <property type="entry name" value="GST C-terminal domain-like"/>
    <property type="match status" value="1"/>
</dbReference>
<dbReference type="SUPFAM" id="SSF52833">
    <property type="entry name" value="Thioredoxin-like"/>
    <property type="match status" value="1"/>
</dbReference>
<dbReference type="PROSITE" id="PS00195">
    <property type="entry name" value="GLUTAREDOXIN_1"/>
    <property type="match status" value="1"/>
</dbReference>
<dbReference type="PROSITE" id="PS50404">
    <property type="entry name" value="GST_NTER"/>
    <property type="match status" value="1"/>
</dbReference>
<sequence length="215" mass="24350">MKLYIYDHCPYCLKARMIFGLKNIPVELHVLLNDDAETPTRMVGQKQVPILQKDDSRYMPESMDIVHYVDKLDGKPLLTGKRSPAIEEWLRKVNGYANKLLLPRFAKSAFDEFSTPAARKYFVDKKEASAGNFADLLAHSDGLIKNISDDLRALDKLIVKPNAVNGELSEDDIQLFPLLRNLTLVAGINWPSRVADYRDNMAKQTQINLLSSMAI</sequence>